<evidence type="ECO:0000250" key="1">
    <source>
        <dbReference type="UniProtKB" id="Q9P0L0"/>
    </source>
</evidence>
<evidence type="ECO:0000255" key="2"/>
<evidence type="ECO:0000255" key="3">
    <source>
        <dbReference type="PROSITE-ProRule" id="PRU00132"/>
    </source>
</evidence>
<evidence type="ECO:0000256" key="4">
    <source>
        <dbReference type="SAM" id="MobiDB-lite"/>
    </source>
</evidence>
<evidence type="ECO:0000269" key="5">
    <source>
    </source>
</evidence>
<evidence type="ECO:0000269" key="6">
    <source>
    </source>
</evidence>
<evidence type="ECO:0000269" key="7">
    <source>
    </source>
</evidence>
<evidence type="ECO:0000305" key="8"/>
<evidence type="ECO:0000312" key="9">
    <source>
        <dbReference type="RGD" id="61803"/>
    </source>
</evidence>
<evidence type="ECO:0007744" key="10">
    <source>
    </source>
</evidence>
<evidence type="ECO:0007829" key="11">
    <source>
        <dbReference type="PDB" id="1Z9L"/>
    </source>
</evidence>
<gene>
    <name evidence="9" type="primary">Vapa</name>
    <name type="synonym">Vap33</name>
</gene>
<name>VAPA_RAT</name>
<protein>
    <recommendedName>
        <fullName evidence="8">Vesicle-associated membrane protein-associated protein A</fullName>
        <shortName>VAMP-A</shortName>
        <shortName>VAMP-associated protein A</shortName>
        <shortName>VAP-A</shortName>
    </recommendedName>
    <alternativeName>
        <fullName>33 kDa VAMP-associated protein</fullName>
        <shortName>VAP-33</shortName>
    </alternativeName>
</protein>
<reference key="1">
    <citation type="journal article" date="2004" name="Genome Res.">
        <title>The status, quality, and expansion of the NIH full-length cDNA project: the Mammalian Gene Collection (MGC).</title>
        <authorList>
            <consortium name="The MGC Project Team"/>
        </authorList>
    </citation>
    <scope>NUCLEOTIDE SEQUENCE [LARGE SCALE MRNA]</scope>
    <source>
        <tissue>Prostate</tissue>
    </source>
</reference>
<reference key="2">
    <citation type="journal article" date="1999" name="Biochem. Biophys. Res. Commun.">
        <title>Molecular cloning and characterization of mammalian homologues of vesicle-associated membrane protein-associated (VAMP-associated) proteins.</title>
        <authorList>
            <person name="Nishimura Y."/>
            <person name="Hayashi M."/>
            <person name="Inada H."/>
            <person name="Tanaka T."/>
        </authorList>
    </citation>
    <scope>NUCLEOTIDE SEQUENCE [MRNA] OF 8-249</scope>
    <source>
        <tissue>Heart</tissue>
    </source>
</reference>
<reference key="3">
    <citation type="journal article" date="2009" name="J. Biol. Chem.">
        <title>Promotion of neurite extension by protrudin requires its interaction with vesicle-associated membrane protein-associated protein.</title>
        <authorList>
            <person name="Saita S."/>
            <person name="Shirane M."/>
            <person name="Natume T."/>
            <person name="Iemura S."/>
            <person name="Nakayama K.I."/>
        </authorList>
    </citation>
    <scope>FUNCTION</scope>
    <scope>INTERACTION WITH ZFYVE27</scope>
</reference>
<reference key="4">
    <citation type="journal article" date="2012" name="Nat. Commun.">
        <title>Quantitative maps of protein phosphorylation sites across 14 different rat organs and tissues.</title>
        <authorList>
            <person name="Lundby A."/>
            <person name="Secher A."/>
            <person name="Lage K."/>
            <person name="Nordsborg N.B."/>
            <person name="Dmytriyev A."/>
            <person name="Lundby C."/>
            <person name="Olsen J.V."/>
        </authorList>
    </citation>
    <scope>PHOSPHORYLATION [LARGE SCALE ANALYSIS] AT SER-214</scope>
    <scope>IDENTIFICATION BY MASS SPECTROMETRY [LARGE SCALE ANALYSIS]</scope>
</reference>
<reference key="5">
    <citation type="journal article" date="2014" name="Biochem. J.">
        <title>Arl6IP1 has the ability to shape the mammalian ER membrane in a reticulon-like fashion.</title>
        <authorList>
            <person name="Yamamoto Y."/>
            <person name="Yoshida A."/>
            <person name="Miyazaki N."/>
            <person name="Iwasaki K."/>
            <person name="Sakisaka T."/>
        </authorList>
    </citation>
    <scope>SUBCELLULAR LOCATION</scope>
</reference>
<reference key="6">
    <citation type="journal article" date="2005" name="Structure">
        <title>Structural basis of FFAT motif-mediated ER targeting.</title>
        <authorList>
            <person name="Kaiser S.E."/>
            <person name="Brickner J.H."/>
            <person name="Reilein A.R."/>
            <person name="Fenn T.D."/>
            <person name="Walter P."/>
            <person name="Brunger A.T."/>
        </authorList>
    </citation>
    <scope>X-RAY CRYSTALLOGRAPHY (1.7 ANGSTROMS) OF 8-132 IN COMPLEX WITH OSBPL1A</scope>
    <scope>MUTAGENESIS OF LYS-94 AND MET-96</scope>
</reference>
<dbReference type="EMBL" id="BC061875">
    <property type="protein sequence ID" value="AAH61875.2"/>
    <property type="molecule type" value="mRNA"/>
</dbReference>
<dbReference type="EMBL" id="AF086630">
    <property type="protein sequence ID" value="AAD13579.1"/>
    <property type="molecule type" value="mRNA"/>
</dbReference>
<dbReference type="RefSeq" id="NP_113819.3">
    <property type="nucleotide sequence ID" value="NM_031631.2"/>
</dbReference>
<dbReference type="PDB" id="1Z9L">
    <property type="method" value="X-ray"/>
    <property type="resolution" value="1.70 A"/>
    <property type="chains" value="A=8-132"/>
</dbReference>
<dbReference type="PDB" id="1Z9O">
    <property type="method" value="X-ray"/>
    <property type="resolution" value="1.90 A"/>
    <property type="chains" value="A/B/C/D/E/F=8-132"/>
</dbReference>
<dbReference type="PDBsum" id="1Z9L"/>
<dbReference type="PDBsum" id="1Z9O"/>
<dbReference type="SMR" id="Q9Z270"/>
<dbReference type="BioGRID" id="248655">
    <property type="interactions" value="4"/>
</dbReference>
<dbReference type="DIP" id="DIP-48448N"/>
<dbReference type="FunCoup" id="Q9Z270">
    <property type="interactions" value="3815"/>
</dbReference>
<dbReference type="IntAct" id="Q9Z270">
    <property type="interactions" value="5"/>
</dbReference>
<dbReference type="MINT" id="Q9Z270"/>
<dbReference type="STRING" id="10116.ENSRNOP00000074577"/>
<dbReference type="iPTMnet" id="Q9Z270"/>
<dbReference type="PhosphoSitePlus" id="Q9Z270"/>
<dbReference type="SwissPalm" id="Q9Z270"/>
<dbReference type="jPOST" id="Q9Z270"/>
<dbReference type="PaxDb" id="10116-ENSRNOP00000020681"/>
<dbReference type="ABCD" id="Q9Z270">
    <property type="antibodies" value="3 sequenced antibodies"/>
</dbReference>
<dbReference type="DNASU" id="58857"/>
<dbReference type="Ensembl" id="ENSRNOT00000020681.7">
    <property type="protein sequence ID" value="ENSRNOP00000020681.3"/>
    <property type="gene ID" value="ENSRNOG00000014765.7"/>
</dbReference>
<dbReference type="GeneID" id="58857"/>
<dbReference type="KEGG" id="rno:58857"/>
<dbReference type="UCSC" id="RGD:61803">
    <property type="organism name" value="rat"/>
</dbReference>
<dbReference type="AGR" id="RGD:61803"/>
<dbReference type="CTD" id="9218"/>
<dbReference type="RGD" id="61803">
    <property type="gene designation" value="Vapa"/>
</dbReference>
<dbReference type="eggNOG" id="KOG0439">
    <property type="taxonomic scope" value="Eukaryota"/>
</dbReference>
<dbReference type="GeneTree" id="ENSGT00940000154799"/>
<dbReference type="HOGENOM" id="CLU_032848_0_1_1"/>
<dbReference type="InParanoid" id="Q9Z270"/>
<dbReference type="OrthoDB" id="264603at2759"/>
<dbReference type="PhylomeDB" id="Q9Z270"/>
<dbReference type="TreeFam" id="TF317024"/>
<dbReference type="Reactome" id="R-RNO-6798695">
    <property type="pathway name" value="Neutrophil degranulation"/>
</dbReference>
<dbReference type="Reactome" id="R-RNO-9609523">
    <property type="pathway name" value="Insertion of tail-anchored proteins into the endoplasmic reticulum membrane"/>
</dbReference>
<dbReference type="EvolutionaryTrace" id="Q9Z270"/>
<dbReference type="PRO" id="PR:Q9Z270"/>
<dbReference type="Proteomes" id="UP000002494">
    <property type="component" value="Chromosome 9"/>
</dbReference>
<dbReference type="Bgee" id="ENSRNOG00000014765">
    <property type="expression patterns" value="Expressed in ovary and 20 other cell types or tissues"/>
</dbReference>
<dbReference type="ExpressionAtlas" id="Q9Z270">
    <property type="expression patterns" value="baseline and differential"/>
</dbReference>
<dbReference type="GO" id="GO:0005923">
    <property type="term" value="C:bicellular tight junction"/>
    <property type="evidence" value="ECO:0000266"/>
    <property type="project" value="RGD"/>
</dbReference>
<dbReference type="GO" id="GO:0005783">
    <property type="term" value="C:endoplasmic reticulum"/>
    <property type="evidence" value="ECO:0000250"/>
    <property type="project" value="UniProtKB"/>
</dbReference>
<dbReference type="GO" id="GO:0005789">
    <property type="term" value="C:endoplasmic reticulum membrane"/>
    <property type="evidence" value="ECO:0000314"/>
    <property type="project" value="UniProtKB"/>
</dbReference>
<dbReference type="GO" id="GO:0000139">
    <property type="term" value="C:Golgi membrane"/>
    <property type="evidence" value="ECO:0000266"/>
    <property type="project" value="RGD"/>
</dbReference>
<dbReference type="GO" id="GO:0016020">
    <property type="term" value="C:membrane"/>
    <property type="evidence" value="ECO:0000314"/>
    <property type="project" value="BHF-UCL"/>
</dbReference>
<dbReference type="GO" id="GO:0015630">
    <property type="term" value="C:microtubule cytoskeleton"/>
    <property type="evidence" value="ECO:0000266"/>
    <property type="project" value="RGD"/>
</dbReference>
<dbReference type="GO" id="GO:0031965">
    <property type="term" value="C:nuclear membrane"/>
    <property type="evidence" value="ECO:0000314"/>
    <property type="project" value="UniProtKB"/>
</dbReference>
<dbReference type="GO" id="GO:0048471">
    <property type="term" value="C:perinuclear region of cytoplasm"/>
    <property type="evidence" value="ECO:0000266"/>
    <property type="project" value="RGD"/>
</dbReference>
<dbReference type="GO" id="GO:0005886">
    <property type="term" value="C:plasma membrane"/>
    <property type="evidence" value="ECO:0000266"/>
    <property type="project" value="RGD"/>
</dbReference>
<dbReference type="GO" id="GO:0031982">
    <property type="term" value="C:vesicle"/>
    <property type="evidence" value="ECO:0000266"/>
    <property type="project" value="RGD"/>
</dbReference>
<dbReference type="GO" id="GO:0033149">
    <property type="term" value="F:FFAT motif binding"/>
    <property type="evidence" value="ECO:0000266"/>
    <property type="project" value="RGD"/>
</dbReference>
<dbReference type="GO" id="GO:0042802">
    <property type="term" value="F:identical protein binding"/>
    <property type="evidence" value="ECO:0000353"/>
    <property type="project" value="IntAct"/>
</dbReference>
<dbReference type="GO" id="GO:0008017">
    <property type="term" value="F:microtubule binding"/>
    <property type="evidence" value="ECO:0000266"/>
    <property type="project" value="RGD"/>
</dbReference>
<dbReference type="GO" id="GO:0019904">
    <property type="term" value="F:protein domain specific binding"/>
    <property type="evidence" value="ECO:0000266"/>
    <property type="project" value="RGD"/>
</dbReference>
<dbReference type="GO" id="GO:0046982">
    <property type="term" value="F:protein heterodimerization activity"/>
    <property type="evidence" value="ECO:0000266"/>
    <property type="project" value="RGD"/>
</dbReference>
<dbReference type="GO" id="GO:0042803">
    <property type="term" value="F:protein homodimerization activity"/>
    <property type="evidence" value="ECO:0000266"/>
    <property type="project" value="RGD"/>
</dbReference>
<dbReference type="GO" id="GO:0044877">
    <property type="term" value="F:protein-containing complex binding"/>
    <property type="evidence" value="ECO:0000314"/>
    <property type="project" value="RGD"/>
</dbReference>
<dbReference type="GO" id="GO:0043495">
    <property type="term" value="F:protein-membrane adaptor activity"/>
    <property type="evidence" value="ECO:0000318"/>
    <property type="project" value="GO_Central"/>
</dbReference>
<dbReference type="GO" id="GO:0035627">
    <property type="term" value="P:ceramide transport"/>
    <property type="evidence" value="ECO:0000266"/>
    <property type="project" value="RGD"/>
</dbReference>
<dbReference type="GO" id="GO:0030301">
    <property type="term" value="P:cholesterol transport"/>
    <property type="evidence" value="ECO:0000266"/>
    <property type="project" value="RGD"/>
</dbReference>
<dbReference type="GO" id="GO:0090114">
    <property type="term" value="P:COPII-coated vesicle budding"/>
    <property type="evidence" value="ECO:0000266"/>
    <property type="project" value="RGD"/>
</dbReference>
<dbReference type="GO" id="GO:0006888">
    <property type="term" value="P:endoplasmic reticulum to Golgi vesicle-mediated transport"/>
    <property type="evidence" value="ECO:0000266"/>
    <property type="project" value="RGD"/>
</dbReference>
<dbReference type="GO" id="GO:0061817">
    <property type="term" value="P:endoplasmic reticulum-plasma membrane tethering"/>
    <property type="evidence" value="ECO:0000266"/>
    <property type="project" value="RGD"/>
</dbReference>
<dbReference type="GO" id="GO:0044828">
    <property type="term" value="P:negative regulation by host of viral genome replication"/>
    <property type="evidence" value="ECO:0000266"/>
    <property type="project" value="RGD"/>
</dbReference>
<dbReference type="GO" id="GO:0031175">
    <property type="term" value="P:neuron projection development"/>
    <property type="evidence" value="ECO:0000315"/>
    <property type="project" value="UniProtKB"/>
</dbReference>
<dbReference type="GO" id="GO:0015914">
    <property type="term" value="P:phospholipid transport"/>
    <property type="evidence" value="ECO:0000266"/>
    <property type="project" value="RGD"/>
</dbReference>
<dbReference type="GO" id="GO:0044829">
    <property type="term" value="P:positive regulation by host of viral genome replication"/>
    <property type="evidence" value="ECO:0000266"/>
    <property type="project" value="RGD"/>
</dbReference>
<dbReference type="GO" id="GO:0070972">
    <property type="term" value="P:protein localization to endoplasmic reticulum"/>
    <property type="evidence" value="ECO:0000250"/>
    <property type="project" value="UniProtKB"/>
</dbReference>
<dbReference type="GO" id="GO:0006686">
    <property type="term" value="P:sphingomyelin biosynthetic process"/>
    <property type="evidence" value="ECO:0000266"/>
    <property type="project" value="RGD"/>
</dbReference>
<dbReference type="GO" id="GO:0015918">
    <property type="term" value="P:sterol transport"/>
    <property type="evidence" value="ECO:0000266"/>
    <property type="project" value="RGD"/>
</dbReference>
<dbReference type="GO" id="GO:0019076">
    <property type="term" value="P:viral release from host cell"/>
    <property type="evidence" value="ECO:0000266"/>
    <property type="project" value="RGD"/>
</dbReference>
<dbReference type="FunFam" id="2.60.40.10:FF:000334">
    <property type="entry name" value="vesicle-associated membrane protein-associated protein A isoform X1"/>
    <property type="match status" value="1"/>
</dbReference>
<dbReference type="Gene3D" id="2.60.40.10">
    <property type="entry name" value="Immunoglobulins"/>
    <property type="match status" value="1"/>
</dbReference>
<dbReference type="InterPro" id="IPR013783">
    <property type="entry name" value="Ig-like_fold"/>
</dbReference>
<dbReference type="InterPro" id="IPR000535">
    <property type="entry name" value="MSP_dom"/>
</dbReference>
<dbReference type="InterPro" id="IPR008962">
    <property type="entry name" value="PapD-like_sf"/>
</dbReference>
<dbReference type="InterPro" id="IPR016763">
    <property type="entry name" value="VAP"/>
</dbReference>
<dbReference type="PANTHER" id="PTHR10809">
    <property type="entry name" value="VESICLE-ASSOCIATED MEMBRANE PROTEIN-ASSOCIATED PROTEIN"/>
    <property type="match status" value="1"/>
</dbReference>
<dbReference type="PANTHER" id="PTHR10809:SF155">
    <property type="entry name" value="VESICLE-ASSOCIATED MEMBRANE PROTEIN-ASSOCIATED PROTEIN A"/>
    <property type="match status" value="1"/>
</dbReference>
<dbReference type="Pfam" id="PF00635">
    <property type="entry name" value="Motile_Sperm"/>
    <property type="match status" value="1"/>
</dbReference>
<dbReference type="PIRSF" id="PIRSF019693">
    <property type="entry name" value="VAMP-associated"/>
    <property type="match status" value="1"/>
</dbReference>
<dbReference type="SUPFAM" id="SSF49354">
    <property type="entry name" value="PapD-like"/>
    <property type="match status" value="1"/>
</dbReference>
<dbReference type="PROSITE" id="PS50202">
    <property type="entry name" value="MSP"/>
    <property type="match status" value="1"/>
</dbReference>
<feature type="initiator methionine" description="Removed" evidence="1">
    <location>
        <position position="1"/>
    </location>
</feature>
<feature type="chain" id="PRO_0000213472" description="Vesicle-associated membrane protein-associated protein A">
    <location>
        <begin position="2"/>
        <end position="249"/>
    </location>
</feature>
<feature type="topological domain" description="Cytoplasmic" evidence="2">
    <location>
        <begin position="2"/>
        <end position="227"/>
    </location>
</feature>
<feature type="transmembrane region" description="Helical; Anchor for type IV membrane protein" evidence="2">
    <location>
        <begin position="228"/>
        <end position="248"/>
    </location>
</feature>
<feature type="domain" description="MSP" evidence="3">
    <location>
        <begin position="14"/>
        <end position="131"/>
    </location>
</feature>
<feature type="region of interest" description="phosphorylated FFAT motif binding" evidence="1">
    <location>
        <begin position="50"/>
        <end position="53"/>
    </location>
</feature>
<feature type="region of interest" description="Disordered" evidence="4">
    <location>
        <begin position="135"/>
        <end position="166"/>
    </location>
</feature>
<feature type="coiled-coil region" evidence="2">
    <location>
        <begin position="168"/>
        <end position="207"/>
    </location>
</feature>
<feature type="compositionally biased region" description="Basic and acidic residues" evidence="4">
    <location>
        <begin position="135"/>
        <end position="144"/>
    </location>
</feature>
<feature type="site" description="Involved in binding the phosphorylated serine of the phospho-FFAT motif" evidence="1">
    <location>
        <position position="50"/>
    </location>
</feature>
<feature type="modified residue" description="N-acetylalanine" evidence="1">
    <location>
        <position position="2"/>
    </location>
</feature>
<feature type="modified residue" description="N6-acetyllysine" evidence="1">
    <location>
        <position position="125"/>
    </location>
</feature>
<feature type="modified residue" description="Phosphoserine" evidence="1">
    <location>
        <position position="166"/>
    </location>
</feature>
<feature type="modified residue" description="Phosphothreonine" evidence="1">
    <location>
        <position position="170"/>
    </location>
</feature>
<feature type="modified residue" description="Phosphoserine" evidence="10">
    <location>
        <position position="214"/>
    </location>
</feature>
<feature type="modified residue" description="Phosphoserine" evidence="1">
    <location>
        <position position="216"/>
    </location>
</feature>
<feature type="modified residue" description="Phosphoserine" evidence="1">
    <location>
        <position position="219"/>
    </location>
</feature>
<feature type="disulfide bond" description="Interchain" evidence="1">
    <location>
        <position position="60"/>
    </location>
</feature>
<feature type="mutagenesis site" description="Loss of interaction with OSBPL1A; when associated with D-96." evidence="5">
    <original>K</original>
    <variation>D</variation>
    <location>
        <position position="94"/>
    </location>
</feature>
<feature type="mutagenesis site" description="Loss of interaction with OSBPL1A; when associated with D-94." evidence="5">
    <original>M</original>
    <variation>D</variation>
    <location>
        <position position="96"/>
    </location>
</feature>
<feature type="sequence conflict" description="In Ref. 2; AAD13579." evidence="8" ref="2">
    <original>L</original>
    <variation>P</variation>
    <location>
        <position position="126"/>
    </location>
</feature>
<feature type="sequence conflict" description="In Ref. 2; AAD13579." evidence="8" ref="2">
    <original>L</original>
    <variation>S</variation>
    <location>
        <position position="249"/>
    </location>
</feature>
<feature type="strand" evidence="11">
    <location>
        <begin position="15"/>
        <end position="27"/>
    </location>
</feature>
<feature type="strand" evidence="11">
    <location>
        <begin position="33"/>
        <end position="40"/>
    </location>
</feature>
<feature type="strand" evidence="11">
    <location>
        <begin position="43"/>
        <end position="45"/>
    </location>
</feature>
<feature type="strand" evidence="11">
    <location>
        <begin position="47"/>
        <end position="54"/>
    </location>
</feature>
<feature type="helix" evidence="11">
    <location>
        <begin position="56"/>
        <end position="58"/>
    </location>
</feature>
<feature type="strand" evidence="11">
    <location>
        <begin position="59"/>
        <end position="63"/>
    </location>
</feature>
<feature type="strand" evidence="11">
    <location>
        <begin position="65"/>
        <end position="68"/>
    </location>
</feature>
<feature type="strand" evidence="11">
    <location>
        <begin position="73"/>
        <end position="80"/>
    </location>
</feature>
<feature type="strand" evidence="11">
    <location>
        <begin position="94"/>
        <end position="101"/>
    </location>
</feature>
<feature type="helix" evidence="11">
    <location>
        <begin position="109"/>
        <end position="114"/>
    </location>
</feature>
<feature type="helix" evidence="11">
    <location>
        <begin position="118"/>
        <end position="120"/>
    </location>
</feature>
<feature type="strand" evidence="11">
    <location>
        <begin position="122"/>
        <end position="131"/>
    </location>
</feature>
<accession>Q9Z270</accession>
<accession>Q6P723</accession>
<comment type="function">
    <text evidence="1 6">Endoplasmic reticulum (ER)-anchored protein that mediates the formation of contact sites between the ER and endosomes via interaction with FFAT motif-containing proteins such as STARD3 or WDR44. STARD3-VAPA interaction enables cholesterol transfer from the ER to endosomes. Via interaction with WDR44 participates in neosynthesized protein export. In addition, recruited to the plasma membrane through OSBPL3 binding. The OSBPL3-VAPA complex stimulates RRAS signaling which in turn attenuates integrin beta-1 (ITGB1) activation at the cell surface. With OSBPL3, may regulate ER morphology (By similarity). May play a role in vesicle trafficking (PubMed:19289470).</text>
</comment>
<comment type="subunit">
    <text evidence="1 5 6">Homodimer; disulfide-linked. Heterodimer with VAPB. Interacts with VAMP1, VAMP2, STX1A, BET1, SEC22C and with the C-terminal domain of OCLN (By similarity). Interacts (via MSP domain) with OSBPL1A (via FFAT motif) (PubMed:16004875). Interacts (via MSP domain) with ZFYVE27; may retain ZFYVE27 in the endoplasmic reticulum and regulate its function in cell projections formation (PubMed:19289470). Interacts with OSBP. Interacts (via C-terminus) with RSAD2/viperin (via C-terminus). Interacts with IFITM3. Interacts with OSBPL3 (phosphorylated form). Interacts with KIF5A in a ZFYVE27-dependent manner. Interacts (via MSP domain) with STARD3 (via phosphorylated FFAT motif); this interaction recruits VAPA to the endosome. Interacts with STARD3NL (via FFAT motif). Interacts with CERT1. Interacts with PLEKHA3 and SACM1L to form a ternary complex. Interacts with VPS13A (via FFAT motif). Interacts with RB1CC1 (via phosphorylated FFAT motif), MIGA2 (via phosphorylated FFAT motif), RMDN3 (via phosphorylated FFAT motif), KCNB1 (via phosphorylated FFAT motif) and KCNB2 (via phosphorylated FFAT motif) (By similarity). Interacts (via MSP domain) with WDR44; the interactions connect the endoplasmic reticulum (ER) with the endosomal tubule (By similarity).</text>
</comment>
<comment type="interaction">
    <interactant intactId="EBI-2909425">
        <id>Q9Z270</id>
    </interactant>
    <interactant intactId="EBI-15554439">
        <id>Q8K4M9</id>
        <label>Osbpl1a</label>
    </interactant>
    <organismsDiffer>false</organismsDiffer>
    <experiments>6</experiments>
</comment>
<comment type="interaction">
    <interactant intactId="EBI-2909425">
        <id>Q9Z270</id>
    </interactant>
    <interactant intactId="EBI-2909425">
        <id>Q9Z270</id>
        <label>Vapa</label>
    </interactant>
    <organismsDiffer>false</organismsDiffer>
    <experiments>2</experiments>
</comment>
<comment type="subcellular location">
    <subcellularLocation>
        <location evidence="7">Endoplasmic reticulum membrane</location>
        <topology evidence="1">Single-pass type IV membrane protein</topology>
    </subcellularLocation>
    <subcellularLocation>
        <location evidence="1">Cell membrane</location>
        <topology evidence="8">Single-pass type IV membrane protein</topology>
    </subcellularLocation>
    <subcellularLocation>
        <location evidence="1">Cell junction</location>
        <location evidence="1">Tight junction</location>
    </subcellularLocation>
    <subcellularLocation>
        <location evidence="7">Nucleus membrane</location>
    </subcellularLocation>
    <text evidence="1">Present in the plasma membrane and in intracellular vesicles, together with SNARE proteins. May also associate with the cytoskeleton. Colocalizes with OCLN at the tight junction in polarized epithelial cells.</text>
</comment>
<comment type="tissue specificity">
    <text>Ubiquitous.</text>
</comment>
<comment type="domain">
    <text evidence="1">The MSP domain binds the FFAT motif of many proteins.</text>
</comment>
<comment type="similarity">
    <text evidence="8">Belongs to the VAMP-associated protein (VAP) (TC 9.B.17) family.</text>
</comment>
<keyword id="KW-0002">3D-structure</keyword>
<keyword id="KW-0007">Acetylation</keyword>
<keyword id="KW-0965">Cell junction</keyword>
<keyword id="KW-1003">Cell membrane</keyword>
<keyword id="KW-0175">Coiled coil</keyword>
<keyword id="KW-1015">Disulfide bond</keyword>
<keyword id="KW-0256">Endoplasmic reticulum</keyword>
<keyword id="KW-0472">Membrane</keyword>
<keyword id="KW-0539">Nucleus</keyword>
<keyword id="KW-0597">Phosphoprotein</keyword>
<keyword id="KW-1185">Reference proteome</keyword>
<keyword id="KW-0796">Tight junction</keyword>
<keyword id="KW-0812">Transmembrane</keyword>
<keyword id="KW-1133">Transmembrane helix</keyword>
<organism>
    <name type="scientific">Rattus norvegicus</name>
    <name type="common">Rat</name>
    <dbReference type="NCBI Taxonomy" id="10116"/>
    <lineage>
        <taxon>Eukaryota</taxon>
        <taxon>Metazoa</taxon>
        <taxon>Chordata</taxon>
        <taxon>Craniata</taxon>
        <taxon>Vertebrata</taxon>
        <taxon>Euteleostomi</taxon>
        <taxon>Mammalia</taxon>
        <taxon>Eutheria</taxon>
        <taxon>Euarchontoglires</taxon>
        <taxon>Glires</taxon>
        <taxon>Rodentia</taxon>
        <taxon>Myomorpha</taxon>
        <taxon>Muroidea</taxon>
        <taxon>Muridae</taxon>
        <taxon>Murinae</taxon>
        <taxon>Rattus</taxon>
    </lineage>
</organism>
<sequence length="249" mass="27841">MASASGAMAKHEQILVLDPPSDLKFKGPFTDVVTTNLKLQNPSDRKVCFKVKTTAPRRYCVRPNSGVIDPGSIVTVSVMLQPFDYDPNEKSKHKFMVQTIFAPPNISDMEAVWKEAKPDELMDSKLRCVFEMPNENDKLNDMEPSKAVPLNASKQDGPLPKPHSVSLNDTETRKLMEECKRLQGEMMKLSEENRHLRDEGLRLRKVAHSDKPGSTSAVSFRDNVTSPLPSLLVVIAAIFIGFFLGKFIL</sequence>
<proteinExistence type="evidence at protein level"/>